<feature type="chain" id="PRO_1000021197" description="4-hydroxy-3-methylbut-2-enyl diphosphate reductase">
    <location>
        <begin position="1"/>
        <end position="317"/>
    </location>
</feature>
<feature type="active site" description="Proton donor" evidence="1">
    <location>
        <position position="127"/>
    </location>
</feature>
<feature type="binding site" evidence="1">
    <location>
        <position position="12"/>
    </location>
    <ligand>
        <name>[4Fe-4S] cluster</name>
        <dbReference type="ChEBI" id="CHEBI:49883"/>
    </ligand>
</feature>
<feature type="binding site" evidence="1">
    <location>
        <position position="41"/>
    </location>
    <ligand>
        <name>(2E)-4-hydroxy-3-methylbut-2-enyl diphosphate</name>
        <dbReference type="ChEBI" id="CHEBI:128753"/>
    </ligand>
</feature>
<feature type="binding site" evidence="1">
    <location>
        <position position="41"/>
    </location>
    <ligand>
        <name>dimethylallyl diphosphate</name>
        <dbReference type="ChEBI" id="CHEBI:57623"/>
    </ligand>
</feature>
<feature type="binding site" evidence="1">
    <location>
        <position position="41"/>
    </location>
    <ligand>
        <name>isopentenyl diphosphate</name>
        <dbReference type="ChEBI" id="CHEBI:128769"/>
    </ligand>
</feature>
<feature type="binding site" evidence="1">
    <location>
        <position position="74"/>
    </location>
    <ligand>
        <name>(2E)-4-hydroxy-3-methylbut-2-enyl diphosphate</name>
        <dbReference type="ChEBI" id="CHEBI:128753"/>
    </ligand>
</feature>
<feature type="binding site" evidence="1">
    <location>
        <position position="74"/>
    </location>
    <ligand>
        <name>dimethylallyl diphosphate</name>
        <dbReference type="ChEBI" id="CHEBI:57623"/>
    </ligand>
</feature>
<feature type="binding site" evidence="1">
    <location>
        <position position="74"/>
    </location>
    <ligand>
        <name>isopentenyl diphosphate</name>
        <dbReference type="ChEBI" id="CHEBI:128769"/>
    </ligand>
</feature>
<feature type="binding site" evidence="1">
    <location>
        <position position="97"/>
    </location>
    <ligand>
        <name>[4Fe-4S] cluster</name>
        <dbReference type="ChEBI" id="CHEBI:49883"/>
    </ligand>
</feature>
<feature type="binding site" evidence="1">
    <location>
        <position position="125"/>
    </location>
    <ligand>
        <name>(2E)-4-hydroxy-3-methylbut-2-enyl diphosphate</name>
        <dbReference type="ChEBI" id="CHEBI:128753"/>
    </ligand>
</feature>
<feature type="binding site" evidence="1">
    <location>
        <position position="125"/>
    </location>
    <ligand>
        <name>dimethylallyl diphosphate</name>
        <dbReference type="ChEBI" id="CHEBI:57623"/>
    </ligand>
</feature>
<feature type="binding site" evidence="1">
    <location>
        <position position="125"/>
    </location>
    <ligand>
        <name>isopentenyl diphosphate</name>
        <dbReference type="ChEBI" id="CHEBI:128769"/>
    </ligand>
</feature>
<feature type="binding site" evidence="1">
    <location>
        <position position="168"/>
    </location>
    <ligand>
        <name>(2E)-4-hydroxy-3-methylbut-2-enyl diphosphate</name>
        <dbReference type="ChEBI" id="CHEBI:128753"/>
    </ligand>
</feature>
<feature type="binding site" evidence="1">
    <location>
        <position position="198"/>
    </location>
    <ligand>
        <name>[4Fe-4S] cluster</name>
        <dbReference type="ChEBI" id="CHEBI:49883"/>
    </ligand>
</feature>
<feature type="binding site" evidence="1">
    <location>
        <position position="226"/>
    </location>
    <ligand>
        <name>(2E)-4-hydroxy-3-methylbut-2-enyl diphosphate</name>
        <dbReference type="ChEBI" id="CHEBI:128753"/>
    </ligand>
</feature>
<feature type="binding site" evidence="1">
    <location>
        <position position="226"/>
    </location>
    <ligand>
        <name>dimethylallyl diphosphate</name>
        <dbReference type="ChEBI" id="CHEBI:57623"/>
    </ligand>
</feature>
<feature type="binding site" evidence="1">
    <location>
        <position position="226"/>
    </location>
    <ligand>
        <name>isopentenyl diphosphate</name>
        <dbReference type="ChEBI" id="CHEBI:128769"/>
    </ligand>
</feature>
<feature type="binding site" evidence="1">
    <location>
        <position position="227"/>
    </location>
    <ligand>
        <name>(2E)-4-hydroxy-3-methylbut-2-enyl diphosphate</name>
        <dbReference type="ChEBI" id="CHEBI:128753"/>
    </ligand>
</feature>
<feature type="binding site" evidence="1">
    <location>
        <position position="227"/>
    </location>
    <ligand>
        <name>dimethylallyl diphosphate</name>
        <dbReference type="ChEBI" id="CHEBI:57623"/>
    </ligand>
</feature>
<feature type="binding site" evidence="1">
    <location>
        <position position="227"/>
    </location>
    <ligand>
        <name>isopentenyl diphosphate</name>
        <dbReference type="ChEBI" id="CHEBI:128769"/>
    </ligand>
</feature>
<feature type="binding site" evidence="1">
    <location>
        <position position="228"/>
    </location>
    <ligand>
        <name>(2E)-4-hydroxy-3-methylbut-2-enyl diphosphate</name>
        <dbReference type="ChEBI" id="CHEBI:128753"/>
    </ligand>
</feature>
<feature type="binding site" evidence="1">
    <location>
        <position position="228"/>
    </location>
    <ligand>
        <name>dimethylallyl diphosphate</name>
        <dbReference type="ChEBI" id="CHEBI:57623"/>
    </ligand>
</feature>
<feature type="binding site" evidence="1">
    <location>
        <position position="228"/>
    </location>
    <ligand>
        <name>isopentenyl diphosphate</name>
        <dbReference type="ChEBI" id="CHEBI:128769"/>
    </ligand>
</feature>
<feature type="binding site" evidence="1">
    <location>
        <position position="270"/>
    </location>
    <ligand>
        <name>(2E)-4-hydroxy-3-methylbut-2-enyl diphosphate</name>
        <dbReference type="ChEBI" id="CHEBI:128753"/>
    </ligand>
</feature>
<feature type="binding site" evidence="1">
    <location>
        <position position="270"/>
    </location>
    <ligand>
        <name>dimethylallyl diphosphate</name>
        <dbReference type="ChEBI" id="CHEBI:57623"/>
    </ligand>
</feature>
<feature type="binding site" evidence="1">
    <location>
        <position position="270"/>
    </location>
    <ligand>
        <name>isopentenyl diphosphate</name>
        <dbReference type="ChEBI" id="CHEBI:128769"/>
    </ligand>
</feature>
<comment type="function">
    <text evidence="1">Catalyzes the conversion of 1-hydroxy-2-methyl-2-(E)-butenyl 4-diphosphate (HMBPP) into a mixture of isopentenyl diphosphate (IPP) and dimethylallyl diphosphate (DMAPP). Acts in the terminal step of the DOXP/MEP pathway for isoprenoid precursor biosynthesis.</text>
</comment>
<comment type="catalytic activity">
    <reaction evidence="1">
        <text>isopentenyl diphosphate + 2 oxidized [2Fe-2S]-[ferredoxin] + H2O = (2E)-4-hydroxy-3-methylbut-2-enyl diphosphate + 2 reduced [2Fe-2S]-[ferredoxin] + 2 H(+)</text>
        <dbReference type="Rhea" id="RHEA:24488"/>
        <dbReference type="Rhea" id="RHEA-COMP:10000"/>
        <dbReference type="Rhea" id="RHEA-COMP:10001"/>
        <dbReference type="ChEBI" id="CHEBI:15377"/>
        <dbReference type="ChEBI" id="CHEBI:15378"/>
        <dbReference type="ChEBI" id="CHEBI:33737"/>
        <dbReference type="ChEBI" id="CHEBI:33738"/>
        <dbReference type="ChEBI" id="CHEBI:128753"/>
        <dbReference type="ChEBI" id="CHEBI:128769"/>
        <dbReference type="EC" id="1.17.7.4"/>
    </reaction>
</comment>
<comment type="catalytic activity">
    <reaction evidence="1">
        <text>dimethylallyl diphosphate + 2 oxidized [2Fe-2S]-[ferredoxin] + H2O = (2E)-4-hydroxy-3-methylbut-2-enyl diphosphate + 2 reduced [2Fe-2S]-[ferredoxin] + 2 H(+)</text>
        <dbReference type="Rhea" id="RHEA:24825"/>
        <dbReference type="Rhea" id="RHEA-COMP:10000"/>
        <dbReference type="Rhea" id="RHEA-COMP:10001"/>
        <dbReference type="ChEBI" id="CHEBI:15377"/>
        <dbReference type="ChEBI" id="CHEBI:15378"/>
        <dbReference type="ChEBI" id="CHEBI:33737"/>
        <dbReference type="ChEBI" id="CHEBI:33738"/>
        <dbReference type="ChEBI" id="CHEBI:57623"/>
        <dbReference type="ChEBI" id="CHEBI:128753"/>
        <dbReference type="EC" id="1.17.7.4"/>
    </reaction>
</comment>
<comment type="cofactor">
    <cofactor evidence="1">
        <name>[4Fe-4S] cluster</name>
        <dbReference type="ChEBI" id="CHEBI:49883"/>
    </cofactor>
    <text evidence="1">Binds 1 [4Fe-4S] cluster per subunit.</text>
</comment>
<comment type="pathway">
    <text evidence="1">Isoprenoid biosynthesis; dimethylallyl diphosphate biosynthesis; dimethylallyl diphosphate from (2E)-4-hydroxy-3-methylbutenyl diphosphate: step 1/1.</text>
</comment>
<comment type="pathway">
    <text evidence="1">Isoprenoid biosynthesis; isopentenyl diphosphate biosynthesis via DXP pathway; isopentenyl diphosphate from 1-deoxy-D-xylulose 5-phosphate: step 6/6.</text>
</comment>
<comment type="subunit">
    <text evidence="1">Homodimer.</text>
</comment>
<comment type="similarity">
    <text evidence="1">Belongs to the IspH family.</text>
</comment>
<sequence>MQILLANPRGFCAGVDRAISIVERAIEMYGAPIYVRHEVVHNRYVVESLCERGAIFIEEISEVPDGSILIFSAHGVSQAVRAEARSRNLTMLFDATCPLVTKVHMEVARASRKGKEAILIGHAGHPEVEGTMGQYSNPNGGMYLVESPDDVWQLNVKDENNLCFMTQTTLSVDDTSAVIDALNTRFPKIVGPRKDDICYATTNRQEAVRNLANDADIVLVVGSKNSSNSNRLAELVQRMGKPAYLIDSAADIQEFWLQGAKCIGVTAGASAPDILVQQVIARLKDLGAGESIELSGREENIVFEVPKELRVEVKQID</sequence>
<gene>
    <name evidence="1" type="primary">ispH</name>
    <name type="ordered locus">YPA_4071</name>
</gene>
<accession>Q1C0J0</accession>
<proteinExistence type="inferred from homology"/>
<evidence type="ECO:0000255" key="1">
    <source>
        <dbReference type="HAMAP-Rule" id="MF_00191"/>
    </source>
</evidence>
<dbReference type="EC" id="1.17.7.4" evidence="1"/>
<dbReference type="EMBL" id="CP000308">
    <property type="protein sequence ID" value="ABG16032.1"/>
    <property type="molecule type" value="Genomic_DNA"/>
</dbReference>
<dbReference type="RefSeq" id="WP_002210506.1">
    <property type="nucleotide sequence ID" value="NZ_CP009906.1"/>
</dbReference>
<dbReference type="SMR" id="Q1C0J0"/>
<dbReference type="GeneID" id="57974132"/>
<dbReference type="KEGG" id="ypa:YPA_4071"/>
<dbReference type="UniPathway" id="UPA00056">
    <property type="reaction ID" value="UER00097"/>
</dbReference>
<dbReference type="UniPathway" id="UPA00059">
    <property type="reaction ID" value="UER00105"/>
</dbReference>
<dbReference type="Proteomes" id="UP000001971">
    <property type="component" value="Chromosome"/>
</dbReference>
<dbReference type="GO" id="GO:0051539">
    <property type="term" value="F:4 iron, 4 sulfur cluster binding"/>
    <property type="evidence" value="ECO:0007669"/>
    <property type="project" value="UniProtKB-UniRule"/>
</dbReference>
<dbReference type="GO" id="GO:0051745">
    <property type="term" value="F:4-hydroxy-3-methylbut-2-enyl diphosphate reductase activity"/>
    <property type="evidence" value="ECO:0007669"/>
    <property type="project" value="UniProtKB-UniRule"/>
</dbReference>
<dbReference type="GO" id="GO:0046872">
    <property type="term" value="F:metal ion binding"/>
    <property type="evidence" value="ECO:0007669"/>
    <property type="project" value="UniProtKB-KW"/>
</dbReference>
<dbReference type="GO" id="GO:0050992">
    <property type="term" value="P:dimethylallyl diphosphate biosynthetic process"/>
    <property type="evidence" value="ECO:0007669"/>
    <property type="project" value="UniProtKB-UniRule"/>
</dbReference>
<dbReference type="GO" id="GO:0019288">
    <property type="term" value="P:isopentenyl diphosphate biosynthetic process, methylerythritol 4-phosphate pathway"/>
    <property type="evidence" value="ECO:0007669"/>
    <property type="project" value="UniProtKB-UniRule"/>
</dbReference>
<dbReference type="GO" id="GO:0016114">
    <property type="term" value="P:terpenoid biosynthetic process"/>
    <property type="evidence" value="ECO:0007669"/>
    <property type="project" value="UniProtKB-UniRule"/>
</dbReference>
<dbReference type="CDD" id="cd13944">
    <property type="entry name" value="lytB_ispH"/>
    <property type="match status" value="1"/>
</dbReference>
<dbReference type="FunFam" id="3.40.50.11270:FF:000001">
    <property type="entry name" value="4-hydroxy-3-methylbut-2-enyl diphosphate reductase"/>
    <property type="match status" value="1"/>
</dbReference>
<dbReference type="Gene3D" id="3.40.50.11270">
    <property type="match status" value="1"/>
</dbReference>
<dbReference type="Gene3D" id="3.40.1010.20">
    <property type="entry name" value="4-hydroxy-3-methylbut-2-enyl diphosphate reductase, catalytic domain"/>
    <property type="match status" value="2"/>
</dbReference>
<dbReference type="HAMAP" id="MF_00191">
    <property type="entry name" value="IspH"/>
    <property type="match status" value="1"/>
</dbReference>
<dbReference type="InterPro" id="IPR003451">
    <property type="entry name" value="LytB/IspH"/>
</dbReference>
<dbReference type="NCBIfam" id="TIGR00216">
    <property type="entry name" value="ispH_lytB"/>
    <property type="match status" value="1"/>
</dbReference>
<dbReference type="NCBIfam" id="NF002188">
    <property type="entry name" value="PRK01045.1-2"/>
    <property type="match status" value="1"/>
</dbReference>
<dbReference type="NCBIfam" id="NF002190">
    <property type="entry name" value="PRK01045.1-4"/>
    <property type="match status" value="1"/>
</dbReference>
<dbReference type="PANTHER" id="PTHR30426">
    <property type="entry name" value="4-HYDROXY-3-METHYLBUT-2-ENYL DIPHOSPHATE REDUCTASE"/>
    <property type="match status" value="1"/>
</dbReference>
<dbReference type="PANTHER" id="PTHR30426:SF0">
    <property type="entry name" value="4-HYDROXY-3-METHYLBUT-2-ENYL DIPHOSPHATE REDUCTASE"/>
    <property type="match status" value="1"/>
</dbReference>
<dbReference type="Pfam" id="PF02401">
    <property type="entry name" value="LYTB"/>
    <property type="match status" value="1"/>
</dbReference>
<protein>
    <recommendedName>
        <fullName evidence="1">4-hydroxy-3-methylbut-2-enyl diphosphate reductase</fullName>
        <shortName evidence="1">HMBPP reductase</shortName>
        <ecNumber evidence="1">1.17.7.4</ecNumber>
    </recommendedName>
</protein>
<name>ISPH_YERPA</name>
<reference key="1">
    <citation type="journal article" date="2006" name="J. Bacteriol.">
        <title>Complete genome sequence of Yersinia pestis strains Antiqua and Nepal516: evidence of gene reduction in an emerging pathogen.</title>
        <authorList>
            <person name="Chain P.S.G."/>
            <person name="Hu P."/>
            <person name="Malfatti S.A."/>
            <person name="Radnedge L."/>
            <person name="Larimer F."/>
            <person name="Vergez L.M."/>
            <person name="Worsham P."/>
            <person name="Chu M.C."/>
            <person name="Andersen G.L."/>
        </authorList>
    </citation>
    <scope>NUCLEOTIDE SEQUENCE [LARGE SCALE GENOMIC DNA]</scope>
    <source>
        <strain>Antiqua</strain>
    </source>
</reference>
<keyword id="KW-0004">4Fe-4S</keyword>
<keyword id="KW-0408">Iron</keyword>
<keyword id="KW-0411">Iron-sulfur</keyword>
<keyword id="KW-0414">Isoprene biosynthesis</keyword>
<keyword id="KW-0479">Metal-binding</keyword>
<keyword id="KW-0560">Oxidoreductase</keyword>
<organism>
    <name type="scientific">Yersinia pestis bv. Antiqua (strain Antiqua)</name>
    <dbReference type="NCBI Taxonomy" id="360102"/>
    <lineage>
        <taxon>Bacteria</taxon>
        <taxon>Pseudomonadati</taxon>
        <taxon>Pseudomonadota</taxon>
        <taxon>Gammaproteobacteria</taxon>
        <taxon>Enterobacterales</taxon>
        <taxon>Yersiniaceae</taxon>
        <taxon>Yersinia</taxon>
    </lineage>
</organism>